<keyword id="KW-0963">Cytoplasm</keyword>
<keyword id="KW-0342">GTP-binding</keyword>
<keyword id="KW-0460">Magnesium</keyword>
<keyword id="KW-0479">Metal-binding</keyword>
<keyword id="KW-0501">Molybdenum cofactor biosynthesis</keyword>
<keyword id="KW-0547">Nucleotide-binding</keyword>
<keyword id="KW-1185">Reference proteome</keyword>
<keyword id="KW-0808">Transferase</keyword>
<proteinExistence type="inferred from homology"/>
<sequence>MKHVNVLLAGGASRRFGEPKAFVKWKGRMLYECAKEALGEQTVIISRPEFIDRFQENGENEVYQDAEPFQGMGPLAGIYTAFKKTDGDLYTVLSCDTPLIQRRTMLELKRLMIAGADAVVPISDGQVQPLIAIYHKRIMPVLYDQLSEKRLRISDLLGRISVCYVQAENIGANPAEFININTRDDFSCLEEKSNSLKRD</sequence>
<dbReference type="EC" id="2.7.7.77" evidence="1"/>
<dbReference type="EMBL" id="AF012285">
    <property type="protein sequence ID" value="AAC24900.1"/>
    <property type="molecule type" value="Genomic_DNA"/>
</dbReference>
<dbReference type="EMBL" id="AL009126">
    <property type="protein sequence ID" value="CAB13299.1"/>
    <property type="molecule type" value="Genomic_DNA"/>
</dbReference>
<dbReference type="PIR" id="C69659">
    <property type="entry name" value="C69659"/>
</dbReference>
<dbReference type="RefSeq" id="NP_389309.1">
    <property type="nucleotide sequence ID" value="NC_000964.3"/>
</dbReference>
<dbReference type="RefSeq" id="WP_003232376.1">
    <property type="nucleotide sequence ID" value="NZ_OZ025638.1"/>
</dbReference>
<dbReference type="SMR" id="O31701"/>
<dbReference type="FunCoup" id="O31701">
    <property type="interactions" value="323"/>
</dbReference>
<dbReference type="STRING" id="224308.BSU14260"/>
<dbReference type="PaxDb" id="224308-BSU14260"/>
<dbReference type="EnsemblBacteria" id="CAB13299">
    <property type="protein sequence ID" value="CAB13299"/>
    <property type="gene ID" value="BSU_14260"/>
</dbReference>
<dbReference type="GeneID" id="938791"/>
<dbReference type="KEGG" id="bsu:BSU14260"/>
<dbReference type="PATRIC" id="fig|224308.179.peg.1556"/>
<dbReference type="eggNOG" id="COG0746">
    <property type="taxonomic scope" value="Bacteria"/>
</dbReference>
<dbReference type="InParanoid" id="O31701"/>
<dbReference type="OrthoDB" id="9788394at2"/>
<dbReference type="PhylomeDB" id="O31701"/>
<dbReference type="BioCyc" id="BSUB:BSU14260-MONOMER"/>
<dbReference type="Proteomes" id="UP000001570">
    <property type="component" value="Chromosome"/>
</dbReference>
<dbReference type="GO" id="GO:0005737">
    <property type="term" value="C:cytoplasm"/>
    <property type="evidence" value="ECO:0007669"/>
    <property type="project" value="UniProtKB-SubCell"/>
</dbReference>
<dbReference type="GO" id="GO:0005525">
    <property type="term" value="F:GTP binding"/>
    <property type="evidence" value="ECO:0007669"/>
    <property type="project" value="UniProtKB-UniRule"/>
</dbReference>
<dbReference type="GO" id="GO:0046872">
    <property type="term" value="F:metal ion binding"/>
    <property type="evidence" value="ECO:0007669"/>
    <property type="project" value="UniProtKB-KW"/>
</dbReference>
<dbReference type="GO" id="GO:0061603">
    <property type="term" value="F:molybdenum cofactor guanylyltransferase activity"/>
    <property type="evidence" value="ECO:0007669"/>
    <property type="project" value="UniProtKB-EC"/>
</dbReference>
<dbReference type="GO" id="GO:0016779">
    <property type="term" value="F:nucleotidyltransferase activity"/>
    <property type="evidence" value="ECO:0000318"/>
    <property type="project" value="GO_Central"/>
</dbReference>
<dbReference type="GO" id="GO:0006777">
    <property type="term" value="P:Mo-molybdopterin cofactor biosynthetic process"/>
    <property type="evidence" value="ECO:0007669"/>
    <property type="project" value="UniProtKB-KW"/>
</dbReference>
<dbReference type="CDD" id="cd02503">
    <property type="entry name" value="MobA"/>
    <property type="match status" value="1"/>
</dbReference>
<dbReference type="Gene3D" id="3.90.550.10">
    <property type="entry name" value="Spore Coat Polysaccharide Biosynthesis Protein SpsA, Chain A"/>
    <property type="match status" value="1"/>
</dbReference>
<dbReference type="HAMAP" id="MF_00316">
    <property type="entry name" value="MobA"/>
    <property type="match status" value="1"/>
</dbReference>
<dbReference type="InterPro" id="IPR025877">
    <property type="entry name" value="MobA-like_NTP_Trfase"/>
</dbReference>
<dbReference type="InterPro" id="IPR013482">
    <property type="entry name" value="Molybde_CF_guanTrfase"/>
</dbReference>
<dbReference type="InterPro" id="IPR029044">
    <property type="entry name" value="Nucleotide-diphossugar_trans"/>
</dbReference>
<dbReference type="PANTHER" id="PTHR19136">
    <property type="entry name" value="MOLYBDENUM COFACTOR GUANYLYLTRANSFERASE"/>
    <property type="match status" value="1"/>
</dbReference>
<dbReference type="PANTHER" id="PTHR19136:SF81">
    <property type="entry name" value="MOLYBDENUM COFACTOR GUANYLYLTRANSFERASE"/>
    <property type="match status" value="1"/>
</dbReference>
<dbReference type="Pfam" id="PF12804">
    <property type="entry name" value="NTP_transf_3"/>
    <property type="match status" value="1"/>
</dbReference>
<dbReference type="SUPFAM" id="SSF53448">
    <property type="entry name" value="Nucleotide-diphospho-sugar transferases"/>
    <property type="match status" value="1"/>
</dbReference>
<feature type="chain" id="PRO_0000134881" description="Probable molybdenum cofactor guanylyltransferase">
    <location>
        <begin position="1"/>
        <end position="199"/>
    </location>
</feature>
<feature type="binding site" evidence="1">
    <location>
        <begin position="8"/>
        <end position="10"/>
    </location>
    <ligand>
        <name>GTP</name>
        <dbReference type="ChEBI" id="CHEBI:37565"/>
    </ligand>
</feature>
<feature type="binding site" evidence="1">
    <location>
        <position position="20"/>
    </location>
    <ligand>
        <name>GTP</name>
        <dbReference type="ChEBI" id="CHEBI:37565"/>
    </ligand>
</feature>
<feature type="binding site" evidence="1">
    <location>
        <position position="65"/>
    </location>
    <ligand>
        <name>GTP</name>
        <dbReference type="ChEBI" id="CHEBI:37565"/>
    </ligand>
</feature>
<feature type="binding site" evidence="1">
    <location>
        <position position="96"/>
    </location>
    <ligand>
        <name>GTP</name>
        <dbReference type="ChEBI" id="CHEBI:37565"/>
    </ligand>
</feature>
<feature type="binding site" evidence="1">
    <location>
        <position position="96"/>
    </location>
    <ligand>
        <name>Mg(2+)</name>
        <dbReference type="ChEBI" id="CHEBI:18420"/>
    </ligand>
</feature>
<protein>
    <recommendedName>
        <fullName evidence="1">Probable molybdenum cofactor guanylyltransferase</fullName>
        <shortName evidence="1">MoCo guanylyltransferase</shortName>
        <ecNumber evidence="1">2.7.7.77</ecNumber>
    </recommendedName>
    <alternativeName>
        <fullName evidence="1">GTP:molybdopterin guanylyltransferase</fullName>
    </alternativeName>
    <alternativeName>
        <fullName evidence="1">Mo-MPT guanylyltransferase</fullName>
    </alternativeName>
    <alternativeName>
        <fullName evidence="1">Molybdopterin guanylyltransferase</fullName>
    </alternativeName>
    <alternativeName>
        <fullName evidence="1">Molybdopterin-guanine dinucleotide synthase</fullName>
        <shortName evidence="1">MGD synthase</shortName>
    </alternativeName>
</protein>
<reference key="1">
    <citation type="submission" date="1997-07" db="EMBL/GenBank/DDBJ databases">
        <title>Sequence analysis of the mobA-ampS region of the Bacillus subtilis chromosome.</title>
        <authorList>
            <person name="Caldwell R.M."/>
            <person name="Ferrari E."/>
        </authorList>
    </citation>
    <scope>NUCLEOTIDE SEQUENCE [GENOMIC DNA]</scope>
    <source>
        <strain>168</strain>
    </source>
</reference>
<reference key="2">
    <citation type="journal article" date="1997" name="Nature">
        <title>The complete genome sequence of the Gram-positive bacterium Bacillus subtilis.</title>
        <authorList>
            <person name="Kunst F."/>
            <person name="Ogasawara N."/>
            <person name="Moszer I."/>
            <person name="Albertini A.M."/>
            <person name="Alloni G."/>
            <person name="Azevedo V."/>
            <person name="Bertero M.G."/>
            <person name="Bessieres P."/>
            <person name="Bolotin A."/>
            <person name="Borchert S."/>
            <person name="Borriss R."/>
            <person name="Boursier L."/>
            <person name="Brans A."/>
            <person name="Braun M."/>
            <person name="Brignell S.C."/>
            <person name="Bron S."/>
            <person name="Brouillet S."/>
            <person name="Bruschi C.V."/>
            <person name="Caldwell B."/>
            <person name="Capuano V."/>
            <person name="Carter N.M."/>
            <person name="Choi S.-K."/>
            <person name="Codani J.-J."/>
            <person name="Connerton I.F."/>
            <person name="Cummings N.J."/>
            <person name="Daniel R.A."/>
            <person name="Denizot F."/>
            <person name="Devine K.M."/>
            <person name="Duesterhoeft A."/>
            <person name="Ehrlich S.D."/>
            <person name="Emmerson P.T."/>
            <person name="Entian K.-D."/>
            <person name="Errington J."/>
            <person name="Fabret C."/>
            <person name="Ferrari E."/>
            <person name="Foulger D."/>
            <person name="Fritz C."/>
            <person name="Fujita M."/>
            <person name="Fujita Y."/>
            <person name="Fuma S."/>
            <person name="Galizzi A."/>
            <person name="Galleron N."/>
            <person name="Ghim S.-Y."/>
            <person name="Glaser P."/>
            <person name="Goffeau A."/>
            <person name="Golightly E.J."/>
            <person name="Grandi G."/>
            <person name="Guiseppi G."/>
            <person name="Guy B.J."/>
            <person name="Haga K."/>
            <person name="Haiech J."/>
            <person name="Harwood C.R."/>
            <person name="Henaut A."/>
            <person name="Hilbert H."/>
            <person name="Holsappel S."/>
            <person name="Hosono S."/>
            <person name="Hullo M.-F."/>
            <person name="Itaya M."/>
            <person name="Jones L.-M."/>
            <person name="Joris B."/>
            <person name="Karamata D."/>
            <person name="Kasahara Y."/>
            <person name="Klaerr-Blanchard M."/>
            <person name="Klein C."/>
            <person name="Kobayashi Y."/>
            <person name="Koetter P."/>
            <person name="Koningstein G."/>
            <person name="Krogh S."/>
            <person name="Kumano M."/>
            <person name="Kurita K."/>
            <person name="Lapidus A."/>
            <person name="Lardinois S."/>
            <person name="Lauber J."/>
            <person name="Lazarevic V."/>
            <person name="Lee S.-M."/>
            <person name="Levine A."/>
            <person name="Liu H."/>
            <person name="Masuda S."/>
            <person name="Mauel C."/>
            <person name="Medigue C."/>
            <person name="Medina N."/>
            <person name="Mellado R.P."/>
            <person name="Mizuno M."/>
            <person name="Moestl D."/>
            <person name="Nakai S."/>
            <person name="Noback M."/>
            <person name="Noone D."/>
            <person name="O'Reilly M."/>
            <person name="Ogawa K."/>
            <person name="Ogiwara A."/>
            <person name="Oudega B."/>
            <person name="Park S.-H."/>
            <person name="Parro V."/>
            <person name="Pohl T.M."/>
            <person name="Portetelle D."/>
            <person name="Porwollik S."/>
            <person name="Prescott A.M."/>
            <person name="Presecan E."/>
            <person name="Pujic P."/>
            <person name="Purnelle B."/>
            <person name="Rapoport G."/>
            <person name="Rey M."/>
            <person name="Reynolds S."/>
            <person name="Rieger M."/>
            <person name="Rivolta C."/>
            <person name="Rocha E."/>
            <person name="Roche B."/>
            <person name="Rose M."/>
            <person name="Sadaie Y."/>
            <person name="Sato T."/>
            <person name="Scanlan E."/>
            <person name="Schleich S."/>
            <person name="Schroeter R."/>
            <person name="Scoffone F."/>
            <person name="Sekiguchi J."/>
            <person name="Sekowska A."/>
            <person name="Seror S.J."/>
            <person name="Serror P."/>
            <person name="Shin B.-S."/>
            <person name="Soldo B."/>
            <person name="Sorokin A."/>
            <person name="Tacconi E."/>
            <person name="Takagi T."/>
            <person name="Takahashi H."/>
            <person name="Takemaru K."/>
            <person name="Takeuchi M."/>
            <person name="Tamakoshi A."/>
            <person name="Tanaka T."/>
            <person name="Terpstra P."/>
            <person name="Tognoni A."/>
            <person name="Tosato V."/>
            <person name="Uchiyama S."/>
            <person name="Vandenbol M."/>
            <person name="Vannier F."/>
            <person name="Vassarotti A."/>
            <person name="Viari A."/>
            <person name="Wambutt R."/>
            <person name="Wedler E."/>
            <person name="Wedler H."/>
            <person name="Weitzenegger T."/>
            <person name="Winters P."/>
            <person name="Wipat A."/>
            <person name="Yamamoto H."/>
            <person name="Yamane K."/>
            <person name="Yasumoto K."/>
            <person name="Yata K."/>
            <person name="Yoshida K."/>
            <person name="Yoshikawa H.-F."/>
            <person name="Zumstein E."/>
            <person name="Yoshikawa H."/>
            <person name="Danchin A."/>
        </authorList>
    </citation>
    <scope>NUCLEOTIDE SEQUENCE [LARGE SCALE GENOMIC DNA]</scope>
    <source>
        <strain>168</strain>
    </source>
</reference>
<organism>
    <name type="scientific">Bacillus subtilis (strain 168)</name>
    <dbReference type="NCBI Taxonomy" id="224308"/>
    <lineage>
        <taxon>Bacteria</taxon>
        <taxon>Bacillati</taxon>
        <taxon>Bacillota</taxon>
        <taxon>Bacilli</taxon>
        <taxon>Bacillales</taxon>
        <taxon>Bacillaceae</taxon>
        <taxon>Bacillus</taxon>
    </lineage>
</organism>
<gene>
    <name evidence="1" type="primary">mobA</name>
    <name type="ordered locus">BSU14260</name>
</gene>
<comment type="function">
    <text evidence="1">Transfers a GMP moiety from GTP to Mo-molybdopterin (Mo-MPT) cofactor (Moco or molybdenum cofactor) to form Mo-molybdopterin guanine dinucleotide (Mo-MGD) cofactor.</text>
</comment>
<comment type="catalytic activity">
    <reaction evidence="1">
        <text>Mo-molybdopterin + GTP + H(+) = Mo-molybdopterin guanine dinucleotide + diphosphate</text>
        <dbReference type="Rhea" id="RHEA:34243"/>
        <dbReference type="ChEBI" id="CHEBI:15378"/>
        <dbReference type="ChEBI" id="CHEBI:33019"/>
        <dbReference type="ChEBI" id="CHEBI:37565"/>
        <dbReference type="ChEBI" id="CHEBI:71302"/>
        <dbReference type="ChEBI" id="CHEBI:71310"/>
        <dbReference type="EC" id="2.7.7.77"/>
    </reaction>
</comment>
<comment type="cofactor">
    <cofactor evidence="1">
        <name>Mg(2+)</name>
        <dbReference type="ChEBI" id="CHEBI:18420"/>
    </cofactor>
</comment>
<comment type="subcellular location">
    <subcellularLocation>
        <location evidence="1">Cytoplasm</location>
    </subcellularLocation>
</comment>
<comment type="domain">
    <text evidence="1">The N-terminal domain determines nucleotide recognition and specific binding, while the C-terminal domain determines the specific binding to the target protein.</text>
</comment>
<comment type="similarity">
    <text evidence="1">Belongs to the MobA family.</text>
</comment>
<evidence type="ECO:0000255" key="1">
    <source>
        <dbReference type="HAMAP-Rule" id="MF_00316"/>
    </source>
</evidence>
<accession>O31701</accession>
<name>MOBA_BACSU</name>